<organism>
    <name type="scientific">Caenorhabditis elegans</name>
    <dbReference type="NCBI Taxonomy" id="6239"/>
    <lineage>
        <taxon>Eukaryota</taxon>
        <taxon>Metazoa</taxon>
        <taxon>Ecdysozoa</taxon>
        <taxon>Nematoda</taxon>
        <taxon>Chromadorea</taxon>
        <taxon>Rhabditida</taxon>
        <taxon>Rhabditina</taxon>
        <taxon>Rhabditomorpha</taxon>
        <taxon>Rhabditoidea</taxon>
        <taxon>Rhabditidae</taxon>
        <taxon>Peloderinae</taxon>
        <taxon>Caenorhabditis</taxon>
    </lineage>
</organism>
<protein>
    <recommendedName>
        <fullName>C-type lectin domain-containing protein 180</fullName>
    </recommendedName>
</protein>
<evidence type="ECO:0000255" key="1"/>
<evidence type="ECO:0000255" key="2">
    <source>
        <dbReference type="PROSITE-ProRule" id="PRU00040"/>
    </source>
</evidence>
<evidence type="ECO:0000256" key="3">
    <source>
        <dbReference type="SAM" id="MobiDB-lite"/>
    </source>
</evidence>
<evidence type="ECO:0000269" key="4">
    <source>
    </source>
</evidence>
<evidence type="ECO:0000305" key="5"/>
<reference key="1">
    <citation type="journal article" date="1998" name="Science">
        <title>Genome sequence of the nematode C. elegans: a platform for investigating biology.</title>
        <authorList>
            <consortium name="The C. elegans sequencing consortium"/>
        </authorList>
    </citation>
    <scope>NUCLEOTIDE SEQUENCE [LARGE SCALE GENOMIC DNA]</scope>
    <scope>ALTERNATIVE SPLICING</scope>
    <source>
        <strain>Bristol N2</strain>
    </source>
</reference>
<reference key="2">
    <citation type="journal article" date="2003" name="Nat. Biotechnol.">
        <title>Lectin affinity capture, isotope-coded tagging and mass spectrometry to identify N-linked glycoproteins.</title>
        <authorList>
            <person name="Kaji H."/>
            <person name="Saito H."/>
            <person name="Yamauchi Y."/>
            <person name="Shinkawa T."/>
            <person name="Taoka M."/>
            <person name="Hirabayashi J."/>
            <person name="Kasai K."/>
            <person name="Takahashi N."/>
            <person name="Isobe T."/>
        </authorList>
    </citation>
    <scope>GLYCOSYLATION [LARGE SCALE ANALYSIS] AT ASN-133</scope>
    <scope>IDENTIFICATION BY MASS SPECTROMETRY</scope>
    <source>
        <strain>Bristol N2</strain>
    </source>
</reference>
<sequence length="896" mass="100266">MRHLIFTGFVLTLTALEAVNVAKSTDNDIVLKVSTEKHSSRDSHHFSGEWLESPWGDLYQFRAGDQNWLTAREHCLSLNADLAAIRNVEQLDWILSHYAPLSSRFAQRLVQIGLYAPEGQTHEWKWLNGNEINKTLLWSSGEPYDHSMEGRERCGLLNVEKRVLDDVDCESTSPDHHAQRYICQRTSENHKQQQRSNNYIWQKIENLFSFFGIGGSPTPHNATIPNDYEDEVLKNETSATVKSTVKFSDSEEETSSEEEESVSKTLAALPKIEGSGESTALKELQEPEGSGQIVEKKAIETTGDLVSGVDEEKLDKMINKMEEMIKSIDDLTVPPAVLERTTVSTVVLKKEEIVKQEKTDEKKVEDKKETLANELNDNKISESIEGDFDQAQSKDMPKADIEPPKEEDCDEEGSGSGSGEEDEKDESSEKIELAPEKEDKIKEFLGVLRLFLDRAEHGDLRKLLDDQSGKTLLERMKNAVREANRREFEMLEKLENSKKSEEEKEELAKKDQMSTEEQKDLYKKISSAVMKAAKIHKIEEADKVQDEQAMEKFNIAKVKADSEEAESEGTVEVLKSAKEGKAEIKEKVGNDDYYGDYLDDNNVIKIQNREKKDAKEESSSDDKKSTDEKKKEIKKIEKTNKVNHDEPKKEEKKNEEQVKETKLESSTTVAKKEDVTTVASTTEEPKSDKDSEGSGSDIEESTVSSAKPAEAEENEAELEASGHEEVSTTTESTTVAVKEVPVDEIEKIAKLEAKQHTEDEKVTVETKQETAVTPAPTTSEKTSTTAAPSTKPAEETTTTTEAPSTTTKPVTVAVKKVSPEEMEKLVKKESTEKVTLLPPLPTFTFPTLAPFTFPTLPTLATTKPSPAPKVPTLEEILGNLNDQFKKLLSPPKPLPK</sequence>
<feature type="signal peptide" evidence="1">
    <location>
        <begin position="1"/>
        <end position="18"/>
    </location>
</feature>
<feature type="chain" id="PRO_0000250556" description="C-type lectin domain-containing protein 180">
    <location>
        <begin position="19"/>
        <end position="896"/>
    </location>
</feature>
<feature type="domain" description="C-type lectin" evidence="2">
    <location>
        <begin position="54"/>
        <end position="178"/>
    </location>
</feature>
<feature type="region of interest" description="Disordered" evidence="3">
    <location>
        <begin position="243"/>
        <end position="264"/>
    </location>
</feature>
<feature type="region of interest" description="Disordered" evidence="3">
    <location>
        <begin position="354"/>
        <end position="436"/>
    </location>
</feature>
<feature type="region of interest" description="Disordered" evidence="3">
    <location>
        <begin position="492"/>
        <end position="519"/>
    </location>
</feature>
<feature type="region of interest" description="Disordered" evidence="3">
    <location>
        <begin position="557"/>
        <end position="809"/>
    </location>
</feature>
<feature type="compositionally biased region" description="Acidic residues" evidence="3">
    <location>
        <begin position="250"/>
        <end position="260"/>
    </location>
</feature>
<feature type="compositionally biased region" description="Basic and acidic residues" evidence="3">
    <location>
        <begin position="354"/>
        <end position="382"/>
    </location>
</feature>
<feature type="compositionally biased region" description="Basic and acidic residues" evidence="3">
    <location>
        <begin position="395"/>
        <end position="406"/>
    </location>
</feature>
<feature type="compositionally biased region" description="Acidic residues" evidence="3">
    <location>
        <begin position="407"/>
        <end position="426"/>
    </location>
</feature>
<feature type="compositionally biased region" description="Basic and acidic residues" evidence="3">
    <location>
        <begin position="427"/>
        <end position="436"/>
    </location>
</feature>
<feature type="compositionally biased region" description="Basic and acidic residues" evidence="3">
    <location>
        <begin position="575"/>
        <end position="590"/>
    </location>
</feature>
<feature type="compositionally biased region" description="Basic and acidic residues" evidence="3">
    <location>
        <begin position="607"/>
        <end position="663"/>
    </location>
</feature>
<feature type="compositionally biased region" description="Basic and acidic residues" evidence="3">
    <location>
        <begin position="683"/>
        <end position="692"/>
    </location>
</feature>
<feature type="compositionally biased region" description="Low complexity" evidence="3">
    <location>
        <begin position="727"/>
        <end position="739"/>
    </location>
</feature>
<feature type="compositionally biased region" description="Basic and acidic residues" evidence="3">
    <location>
        <begin position="740"/>
        <end position="768"/>
    </location>
</feature>
<feature type="compositionally biased region" description="Low complexity" evidence="3">
    <location>
        <begin position="773"/>
        <end position="809"/>
    </location>
</feature>
<feature type="glycosylation site" description="N-linked (GlcNAc...) asparagine" evidence="4">
    <location>
        <position position="133"/>
    </location>
</feature>
<feature type="glycosylation site" description="N-linked (GlcNAc...) asparagine" evidence="1">
    <location>
        <position position="221"/>
    </location>
</feature>
<feature type="glycosylation site" description="N-linked (GlcNAc...) asparagine" evidence="1">
    <location>
        <position position="235"/>
    </location>
</feature>
<feature type="disulfide bond" evidence="2">
    <location>
        <begin position="154"/>
        <end position="169"/>
    </location>
</feature>
<feature type="splice variant" id="VSP_054946" description="In isoform c and isoform d." evidence="5">
    <location>
        <begin position="1"/>
        <end position="475"/>
    </location>
</feature>
<feature type="splice variant" id="VSP_054945" description="In isoform a and isoform d." evidence="5">
    <location>
        <begin position="588"/>
        <end position="607"/>
    </location>
</feature>
<gene>
    <name type="primary">clec-180</name>
    <name type="ORF">F32E10.3</name>
</gene>
<dbReference type="EMBL" id="FO081278">
    <property type="protein sequence ID" value="CCD70434.1"/>
    <property type="molecule type" value="Genomic_DNA"/>
</dbReference>
<dbReference type="EMBL" id="FO081278">
    <property type="protein sequence ID" value="CDM63532.1"/>
    <property type="molecule type" value="Genomic_DNA"/>
</dbReference>
<dbReference type="EMBL" id="FO081278">
    <property type="protein sequence ID" value="CDM63533.1"/>
    <property type="molecule type" value="Genomic_DNA"/>
</dbReference>
<dbReference type="EMBL" id="FO081278">
    <property type="protein sequence ID" value="CDM63534.1"/>
    <property type="molecule type" value="Genomic_DNA"/>
</dbReference>
<dbReference type="RefSeq" id="NP_001294174.1">
    <molecule id="Q19970-1"/>
    <property type="nucleotide sequence ID" value="NM_001307245.3"/>
</dbReference>
<dbReference type="RefSeq" id="NP_001294175.1">
    <property type="nucleotide sequence ID" value="NM_001307246.1"/>
</dbReference>
<dbReference type="RefSeq" id="NP_001294176.1">
    <property type="nucleotide sequence ID" value="NM_001307247.1"/>
</dbReference>
<dbReference type="RefSeq" id="NP_001368446.1">
    <molecule id="Q19970-3"/>
    <property type="nucleotide sequence ID" value="NM_001380335.1"/>
</dbReference>
<dbReference type="RefSeq" id="NP_001368447.1">
    <molecule id="Q19970-4"/>
    <property type="nucleotide sequence ID" value="NM_001380336.1"/>
</dbReference>
<dbReference type="RefSeq" id="NP_501229.2">
    <molecule id="Q19970-2"/>
    <property type="nucleotide sequence ID" value="NM_068828.4"/>
</dbReference>
<dbReference type="SMR" id="Q19970"/>
<dbReference type="BioGRID" id="42652">
    <property type="interactions" value="1"/>
</dbReference>
<dbReference type="FunCoup" id="Q19970">
    <property type="interactions" value="99"/>
</dbReference>
<dbReference type="STRING" id="6239.F32E10.3b.1"/>
<dbReference type="GlyCosmos" id="Q19970">
    <property type="glycosylation" value="3 sites, No reported glycans"/>
</dbReference>
<dbReference type="iPTMnet" id="Q19970"/>
<dbReference type="PaxDb" id="6239-F32E10.3"/>
<dbReference type="PeptideAtlas" id="Q19970"/>
<dbReference type="EnsemblMetazoa" id="F32E10.3a.1">
    <molecule id="Q19970-2"/>
    <property type="protein sequence ID" value="F32E10.3a.1"/>
    <property type="gene ID" value="WBGene00017991"/>
</dbReference>
<dbReference type="EnsemblMetazoa" id="F32E10.3b.1">
    <molecule id="Q19970-1"/>
    <property type="protein sequence ID" value="F32E10.3b.1"/>
    <property type="gene ID" value="WBGene00017991"/>
</dbReference>
<dbReference type="EnsemblMetazoa" id="F32E10.3c.1">
    <molecule id="Q19970-3"/>
    <property type="protein sequence ID" value="F32E10.3c.1"/>
    <property type="gene ID" value="WBGene00017991"/>
</dbReference>
<dbReference type="EnsemblMetazoa" id="F32E10.3d.1">
    <molecule id="Q19970-4"/>
    <property type="protein sequence ID" value="F32E10.3d.1"/>
    <property type="gene ID" value="WBGene00017991"/>
</dbReference>
<dbReference type="GeneID" id="177534"/>
<dbReference type="KEGG" id="cel:CELE_F32E10.3"/>
<dbReference type="UCSC" id="F32E10.3">
    <molecule id="Q19970-1"/>
    <property type="organism name" value="c. elegans"/>
</dbReference>
<dbReference type="AGR" id="WB:WBGene00017991"/>
<dbReference type="CTD" id="177534"/>
<dbReference type="WormBase" id="F32E10.3a">
    <molecule id="Q19970-2"/>
    <property type="protein sequence ID" value="CE37227"/>
    <property type="gene ID" value="WBGene00017991"/>
    <property type="gene designation" value="clec-180"/>
</dbReference>
<dbReference type="WormBase" id="F32E10.3b">
    <molecule id="Q19970-1"/>
    <property type="protein sequence ID" value="CE29306"/>
    <property type="gene ID" value="WBGene00017991"/>
    <property type="gene designation" value="clec-180"/>
</dbReference>
<dbReference type="WormBase" id="F32E10.3c">
    <molecule id="Q19970-3"/>
    <property type="protein sequence ID" value="CE49552"/>
    <property type="gene ID" value="WBGene00017991"/>
    <property type="gene designation" value="clec-180"/>
</dbReference>
<dbReference type="WormBase" id="F32E10.3d">
    <molecule id="Q19970-4"/>
    <property type="protein sequence ID" value="CE49559"/>
    <property type="gene ID" value="WBGene00017991"/>
    <property type="gene designation" value="clec-180"/>
</dbReference>
<dbReference type="eggNOG" id="KOG1215">
    <property type="taxonomic scope" value="Eukaryota"/>
</dbReference>
<dbReference type="HOGENOM" id="CLU_013642_0_0_1"/>
<dbReference type="InParanoid" id="Q19970"/>
<dbReference type="OMA" id="DCEATTR"/>
<dbReference type="OrthoDB" id="6337382at2759"/>
<dbReference type="PRO" id="PR:Q19970"/>
<dbReference type="Proteomes" id="UP000001940">
    <property type="component" value="Chromosome IV"/>
</dbReference>
<dbReference type="Bgee" id="WBGene00017991">
    <property type="expression patterns" value="Expressed in embryo and 4 other cell types or tissues"/>
</dbReference>
<dbReference type="GO" id="GO:0005576">
    <property type="term" value="C:extracellular region"/>
    <property type="evidence" value="ECO:0007669"/>
    <property type="project" value="UniProtKB-SubCell"/>
</dbReference>
<dbReference type="GO" id="GO:0030246">
    <property type="term" value="F:carbohydrate binding"/>
    <property type="evidence" value="ECO:0007669"/>
    <property type="project" value="UniProtKB-KW"/>
</dbReference>
<dbReference type="CDD" id="cd00037">
    <property type="entry name" value="CLECT"/>
    <property type="match status" value="1"/>
</dbReference>
<dbReference type="Gene3D" id="3.10.100.10">
    <property type="entry name" value="Mannose-Binding Protein A, subunit A"/>
    <property type="match status" value="1"/>
</dbReference>
<dbReference type="InterPro" id="IPR001304">
    <property type="entry name" value="C-type_lectin-like"/>
</dbReference>
<dbReference type="InterPro" id="IPR016186">
    <property type="entry name" value="C-type_lectin-like/link_sf"/>
</dbReference>
<dbReference type="InterPro" id="IPR050828">
    <property type="entry name" value="C-type_lectin/matrix_domain"/>
</dbReference>
<dbReference type="InterPro" id="IPR016187">
    <property type="entry name" value="CTDL_fold"/>
</dbReference>
<dbReference type="PANTHER" id="PTHR45710">
    <property type="entry name" value="C-TYPE LECTIN DOMAIN-CONTAINING PROTEIN 180"/>
    <property type="match status" value="1"/>
</dbReference>
<dbReference type="PANTHER" id="PTHR45710:SF38">
    <property type="entry name" value="C-TYPE LECTIN DOMAIN-CONTAINING PROTEIN 180"/>
    <property type="match status" value="1"/>
</dbReference>
<dbReference type="Pfam" id="PF00059">
    <property type="entry name" value="Lectin_C"/>
    <property type="match status" value="1"/>
</dbReference>
<dbReference type="SMART" id="SM00034">
    <property type="entry name" value="CLECT"/>
    <property type="match status" value="1"/>
</dbReference>
<dbReference type="SUPFAM" id="SSF56436">
    <property type="entry name" value="C-type lectin-like"/>
    <property type="match status" value="1"/>
</dbReference>
<dbReference type="PROSITE" id="PS50041">
    <property type="entry name" value="C_TYPE_LECTIN_2"/>
    <property type="match status" value="1"/>
</dbReference>
<comment type="subcellular location">
    <subcellularLocation>
        <location evidence="5">Secreted</location>
    </subcellularLocation>
</comment>
<comment type="alternative products">
    <event type="alternative splicing"/>
    <isoform>
        <id>Q19970-1</id>
        <name>b</name>
        <sequence type="displayed"/>
    </isoform>
    <isoform>
        <id>Q19970-2</id>
        <name>a</name>
        <sequence type="described" ref="VSP_054945"/>
    </isoform>
    <isoform>
        <id>Q19970-3</id>
        <name>c</name>
        <sequence type="described" ref="VSP_054946"/>
    </isoform>
    <isoform>
        <id>Q19970-4</id>
        <name>d</name>
        <sequence type="described" ref="VSP_054946 VSP_054945"/>
    </isoform>
</comment>
<accession>Q19970</accession>
<accession>W6RRY7</accession>
<accession>W6RTK1</accession>
<accession>W6SBE9</accession>
<keyword id="KW-0025">Alternative splicing</keyword>
<keyword id="KW-1015">Disulfide bond</keyword>
<keyword id="KW-0325">Glycoprotein</keyword>
<keyword id="KW-0430">Lectin</keyword>
<keyword id="KW-1185">Reference proteome</keyword>
<keyword id="KW-0964">Secreted</keyword>
<keyword id="KW-0732">Signal</keyword>
<name>CL180_CAEEL</name>
<proteinExistence type="evidence at protein level"/>